<protein>
    <recommendedName>
        <fullName evidence="7">Meiotic drive suppressor wtf13</fullName>
    </recommendedName>
</protein>
<gene>
    <name evidence="9" type="primary">wtf13</name>
</gene>
<proteinExistence type="inferred from homology"/>
<evidence type="ECO:0000250" key="1">
    <source>
        <dbReference type="UniProtKB" id="A0A218N034"/>
    </source>
</evidence>
<evidence type="ECO:0000250" key="2">
    <source>
        <dbReference type="UniProtKB" id="A0A482ATU4"/>
    </source>
</evidence>
<evidence type="ECO:0000250" key="3">
    <source>
        <dbReference type="UniProtKB" id="O74420"/>
    </source>
</evidence>
<evidence type="ECO:0000255" key="4"/>
<evidence type="ECO:0000256" key="5">
    <source>
        <dbReference type="SAM" id="MobiDB-lite"/>
    </source>
</evidence>
<evidence type="ECO:0000269" key="6">
    <source>
    </source>
</evidence>
<evidence type="ECO:0000303" key="7">
    <source>
    </source>
</evidence>
<evidence type="ECO:0000305" key="8"/>
<evidence type="ECO:0000312" key="9">
    <source>
        <dbReference type="EMBL" id="QBL54503.1"/>
    </source>
</evidence>
<organism evidence="9">
    <name type="scientific">Schizosaccharomyces kambucha</name>
    <name type="common">Fission yeast</name>
    <dbReference type="NCBI Taxonomy" id="204045"/>
    <lineage>
        <taxon>Eukaryota</taxon>
        <taxon>Fungi</taxon>
        <taxon>Dikarya</taxon>
        <taxon>Ascomycota</taxon>
        <taxon>Taphrinomycotina</taxon>
        <taxon>Schizosaccharomycetes</taxon>
        <taxon>Schizosaccharomycetales</taxon>
        <taxon>Schizosaccharomycetaceae</taxon>
        <taxon>Schizosaccharomyces</taxon>
    </lineage>
</organism>
<accession>A0A482AR57</accession>
<comment type="function">
    <text evidence="1 2 6">Acts as a suppressor component of the dual wtf meiotic drive system, and can suppress but not confer meiotic drive by compatible poisons (PubMed:32032353). Wtf meiotic drive systems promote unequal transmission of alleles from the parental zygote to progeny spores by encoding a poison and an antidote from the same locus; the poison is trans-acting and forms toxic aggregates in all spores within an ascus, wherease the antidote is spore-specific and targets aggregates for degradation by the vacuole (By similarity). Meiotic drive by wtf systems therefore lead to poisoning of all progeny that do not inherit the dual poison/antidote allele, or express a compatible antidote (By similarity).</text>
</comment>
<comment type="subunit">
    <text evidence="1 3">Homomer (By similarity). Interacts with other proteins that exhibit high sequence similarity (By similarity).</text>
</comment>
<comment type="subcellular location">
    <subcellularLocation>
        <location evidence="1 4">Spore membrane</location>
        <topology evidence="4">Multi-pass membrane protein</topology>
    </subcellularLocation>
    <subcellularLocation>
        <location evidence="1 4">Vacuole membrane</location>
        <topology evidence="4">Multi-pass membrane protein</topology>
    </subcellularLocation>
</comment>
<comment type="similarity">
    <text evidence="8">Belongs to the WTF family.</text>
</comment>
<feature type="chain" id="PRO_0000452260" description="Meiotic drive suppressor wtf13">
    <location>
        <begin position="1"/>
        <end position="360"/>
    </location>
</feature>
<feature type="transmembrane region" description="Helical" evidence="4">
    <location>
        <begin position="90"/>
        <end position="110"/>
    </location>
</feature>
<feature type="transmembrane region" description="Helical" evidence="4">
    <location>
        <begin position="120"/>
        <end position="140"/>
    </location>
</feature>
<feature type="transmembrane region" description="Helical" evidence="4">
    <location>
        <begin position="150"/>
        <end position="170"/>
    </location>
</feature>
<feature type="transmembrane region" description="Helical" evidence="4">
    <location>
        <begin position="186"/>
        <end position="206"/>
    </location>
</feature>
<feature type="transmembrane region" description="Helical" evidence="4">
    <location>
        <begin position="222"/>
        <end position="242"/>
    </location>
</feature>
<feature type="transmembrane region" description="Helical" evidence="4">
    <location>
        <begin position="246"/>
        <end position="266"/>
    </location>
</feature>
<feature type="transmembrane region" description="Helical" evidence="4">
    <location>
        <begin position="276"/>
        <end position="296"/>
    </location>
</feature>
<feature type="transmembrane region" description="Helical" evidence="4">
    <location>
        <begin position="310"/>
        <end position="330"/>
    </location>
</feature>
<feature type="region of interest" description="Disordered" evidence="5">
    <location>
        <begin position="1"/>
        <end position="20"/>
    </location>
</feature>
<feature type="region of interest" description="Disordered" evidence="5">
    <location>
        <begin position="37"/>
        <end position="75"/>
    </location>
</feature>
<feature type="compositionally biased region" description="Polar residues" evidence="5">
    <location>
        <begin position="1"/>
        <end position="10"/>
    </location>
</feature>
<feature type="compositionally biased region" description="Polar residues" evidence="5">
    <location>
        <begin position="58"/>
        <end position="70"/>
    </location>
</feature>
<name>WTF13_SCHKA</name>
<reference evidence="9" key="1">
    <citation type="journal article" date="2020" name="PLoS Genet.">
        <title>Dramatically diverse Schizosaccharomyces pombe wtf meiotic drivers all display high gamete-killing efficiency.</title>
        <authorList>
            <person name="Bravo Nunez M.A."/>
            <person name="Sabbarini I.M."/>
            <person name="Eickbush M.T."/>
            <person name="Liang Y."/>
            <person name="Lange J.J."/>
            <person name="Kent A.M."/>
            <person name="Zanders S.E."/>
        </authorList>
    </citation>
    <scope>NUCLEOTIDE SEQUENCE [GENOMIC DNA]</scope>
    <scope>FUNCTION</scope>
</reference>
<sequence>MKNNYTSLKSSMDEGDELKTGHEFDLEKGILPEYNSEEEGALPPYSDISKLANPVPEDSSTGPTETTNPNVERRQEFKDSHPNIYSLLRLLISVLAVIVVFFTAWVCVNPLEKSIFGKVAFSVTIGITCPIVFIAIFCFFETWTQAVAQCIKVTVIFLAQCVKVTVISLAKCVKVIAVGLYNSKKDLVVTIWLAWVVICFILFGCVKDGRLNLNKALICSTSSISAALFFILLLVCIPIWTLKHMLFGLFQVLGVQSCVVIVTKGLMYLLDKHIDATGYEIEASSLFVIGNFLFFYEMERPGALKRMPKFIGNGIASFLGGIANAIRGIANAIGGIANAFRGANDNNDIPLGEMDVESEV</sequence>
<keyword id="KW-0472">Membrane</keyword>
<keyword id="KW-0812">Transmembrane</keyword>
<keyword id="KW-1133">Transmembrane helix</keyword>
<keyword id="KW-0926">Vacuole</keyword>
<dbReference type="EMBL" id="MH837439">
    <property type="protein sequence ID" value="QBL54503.1"/>
    <property type="molecule type" value="Genomic_DNA"/>
</dbReference>
<dbReference type="GO" id="GO:0005737">
    <property type="term" value="C:cytoplasm"/>
    <property type="evidence" value="ECO:0000305"/>
    <property type="project" value="UniProtKB"/>
</dbReference>
<dbReference type="GO" id="GO:0005774">
    <property type="term" value="C:vacuolar membrane"/>
    <property type="evidence" value="ECO:0007669"/>
    <property type="project" value="UniProtKB-SubCell"/>
</dbReference>
<dbReference type="GO" id="GO:0110134">
    <property type="term" value="P:meiotic drive"/>
    <property type="evidence" value="ECO:0000269"/>
    <property type="project" value="UniProtKB"/>
</dbReference>
<dbReference type="InterPro" id="IPR004982">
    <property type="entry name" value="WTF"/>
</dbReference>
<dbReference type="Pfam" id="PF03303">
    <property type="entry name" value="WTF"/>
    <property type="match status" value="1"/>
</dbReference>